<feature type="chain" id="PRO_0000251511" description="Large ribosomal subunit protein uL15">
    <location>
        <begin position="1"/>
        <end position="157"/>
    </location>
</feature>
<evidence type="ECO:0000255" key="1">
    <source>
        <dbReference type="HAMAP-Rule" id="MF_01341"/>
    </source>
</evidence>
<evidence type="ECO:0000305" key="2"/>
<keyword id="KW-0687">Ribonucleoprotein</keyword>
<keyword id="KW-0689">Ribosomal protein</keyword>
<keyword id="KW-0694">RNA-binding</keyword>
<keyword id="KW-0699">rRNA-binding</keyword>
<reference key="1">
    <citation type="journal article" date="2005" name="Proc. Natl. Acad. Sci. U.S.A.">
        <title>The genome of the heartwater agent Ehrlichia ruminantium contains multiple tandem repeats of actively variable copy number.</title>
        <authorList>
            <person name="Collins N.E."/>
            <person name="Liebenberg J."/>
            <person name="de Villiers E.P."/>
            <person name="Brayton K.A."/>
            <person name="Louw E."/>
            <person name="Pretorius A."/>
            <person name="Faber F.E."/>
            <person name="van Heerden H."/>
            <person name="Josemans A."/>
            <person name="van Kleef M."/>
            <person name="Steyn H.C."/>
            <person name="van Strijp M.F."/>
            <person name="Zweygarth E."/>
            <person name="Jongejan F."/>
            <person name="Maillard J.C."/>
            <person name="Berthier D."/>
            <person name="Botha M."/>
            <person name="Joubert F."/>
            <person name="Corton C.H."/>
            <person name="Thomson N.R."/>
            <person name="Allsopp M.T."/>
            <person name="Allsopp B.A."/>
        </authorList>
    </citation>
    <scope>NUCLEOTIDE SEQUENCE [LARGE SCALE GENOMIC DNA]</scope>
    <source>
        <strain>Welgevonden</strain>
    </source>
</reference>
<reference key="2">
    <citation type="journal article" date="2006" name="J. Bacteriol.">
        <title>Comparative genomic analysis of three strains of Ehrlichia ruminantium reveals an active process of genome size plasticity.</title>
        <authorList>
            <person name="Frutos R."/>
            <person name="Viari A."/>
            <person name="Ferraz C."/>
            <person name="Morgat A."/>
            <person name="Eychenie S."/>
            <person name="Kandassamy Y."/>
            <person name="Chantal I."/>
            <person name="Bensaid A."/>
            <person name="Coissac E."/>
            <person name="Vachiery N."/>
            <person name="Demaille J."/>
            <person name="Martinez D."/>
        </authorList>
    </citation>
    <scope>NUCLEOTIDE SEQUENCE [LARGE SCALE GENOMIC DNA]</scope>
    <source>
        <strain>Welgevonden</strain>
    </source>
</reference>
<accession>Q5HAU0</accession>
<accession>Q5FD76</accession>
<dbReference type="EMBL" id="CR767821">
    <property type="protein sequence ID" value="CAH58321.1"/>
    <property type="molecule type" value="Genomic_DNA"/>
</dbReference>
<dbReference type="EMBL" id="CR925678">
    <property type="protein sequence ID" value="CAI27114.1"/>
    <property type="molecule type" value="Genomic_DNA"/>
</dbReference>
<dbReference type="RefSeq" id="WP_011155271.1">
    <property type="nucleotide sequence ID" value="NC_005295.2"/>
</dbReference>
<dbReference type="SMR" id="Q5HAU0"/>
<dbReference type="GeneID" id="33058374"/>
<dbReference type="KEGG" id="eru:Erum5900"/>
<dbReference type="KEGG" id="erw:ERWE_CDS_06200"/>
<dbReference type="eggNOG" id="COG0200">
    <property type="taxonomic scope" value="Bacteria"/>
</dbReference>
<dbReference type="HOGENOM" id="CLU_055188_4_0_5"/>
<dbReference type="Proteomes" id="UP000001021">
    <property type="component" value="Chromosome"/>
</dbReference>
<dbReference type="GO" id="GO:0015934">
    <property type="term" value="C:large ribosomal subunit"/>
    <property type="evidence" value="ECO:0007669"/>
    <property type="project" value="InterPro"/>
</dbReference>
<dbReference type="GO" id="GO:0019843">
    <property type="term" value="F:rRNA binding"/>
    <property type="evidence" value="ECO:0007669"/>
    <property type="project" value="UniProtKB-UniRule"/>
</dbReference>
<dbReference type="GO" id="GO:0003735">
    <property type="term" value="F:structural constituent of ribosome"/>
    <property type="evidence" value="ECO:0007669"/>
    <property type="project" value="InterPro"/>
</dbReference>
<dbReference type="GO" id="GO:0006412">
    <property type="term" value="P:translation"/>
    <property type="evidence" value="ECO:0007669"/>
    <property type="project" value="UniProtKB-UniRule"/>
</dbReference>
<dbReference type="Gene3D" id="3.100.10.10">
    <property type="match status" value="1"/>
</dbReference>
<dbReference type="HAMAP" id="MF_01341">
    <property type="entry name" value="Ribosomal_uL15"/>
    <property type="match status" value="1"/>
</dbReference>
<dbReference type="InterPro" id="IPR030878">
    <property type="entry name" value="Ribosomal_uL15"/>
</dbReference>
<dbReference type="InterPro" id="IPR021131">
    <property type="entry name" value="Ribosomal_uL15/eL18"/>
</dbReference>
<dbReference type="InterPro" id="IPR036227">
    <property type="entry name" value="Ribosomal_uL15/eL18_sf"/>
</dbReference>
<dbReference type="InterPro" id="IPR005749">
    <property type="entry name" value="Ribosomal_uL15_bac-type"/>
</dbReference>
<dbReference type="NCBIfam" id="TIGR01071">
    <property type="entry name" value="rplO_bact"/>
    <property type="match status" value="1"/>
</dbReference>
<dbReference type="PANTHER" id="PTHR12934">
    <property type="entry name" value="50S RIBOSOMAL PROTEIN L15"/>
    <property type="match status" value="1"/>
</dbReference>
<dbReference type="PANTHER" id="PTHR12934:SF11">
    <property type="entry name" value="LARGE RIBOSOMAL SUBUNIT PROTEIN UL15M"/>
    <property type="match status" value="1"/>
</dbReference>
<dbReference type="Pfam" id="PF00828">
    <property type="entry name" value="Ribosomal_L27A"/>
    <property type="match status" value="1"/>
</dbReference>
<dbReference type="SUPFAM" id="SSF52080">
    <property type="entry name" value="Ribosomal proteins L15p and L18e"/>
    <property type="match status" value="1"/>
</dbReference>
<comment type="function">
    <text evidence="1">Binds to the 23S rRNA.</text>
</comment>
<comment type="subunit">
    <text evidence="1">Part of the 50S ribosomal subunit.</text>
</comment>
<comment type="similarity">
    <text evidence="1">Belongs to the universal ribosomal protein uL15 family.</text>
</comment>
<sequence length="157" mass="16989">MDVVMKLNNIFSGLPKKKKSKVLGRGIGCGKGKTSGRGHKGQKARSGVSINGFEGGQQSIFTRLPKRGFNSLPKNKYSIINLSLIQRLIDSGKIDNVSAITKEVLYNLGVISSVKQKIKILGDGKLNTTVCIEYDFISKSAKSQVTLLNSLSDSESK</sequence>
<gene>
    <name evidence="1" type="primary">rplO</name>
    <name type="ordered locus">Erum5900</name>
    <name type="ordered locus">ERWE_CDS_06200</name>
</gene>
<name>RL15_EHRRW</name>
<protein>
    <recommendedName>
        <fullName evidence="1">Large ribosomal subunit protein uL15</fullName>
    </recommendedName>
    <alternativeName>
        <fullName evidence="2">50S ribosomal protein L15</fullName>
    </alternativeName>
</protein>
<proteinExistence type="inferred from homology"/>
<organism>
    <name type="scientific">Ehrlichia ruminantium (strain Welgevonden)</name>
    <dbReference type="NCBI Taxonomy" id="254945"/>
    <lineage>
        <taxon>Bacteria</taxon>
        <taxon>Pseudomonadati</taxon>
        <taxon>Pseudomonadota</taxon>
        <taxon>Alphaproteobacteria</taxon>
        <taxon>Rickettsiales</taxon>
        <taxon>Anaplasmataceae</taxon>
        <taxon>Ehrlichia</taxon>
    </lineage>
</organism>